<sequence length="356" mass="41500">MRRELLLEKIETYKAIMPWYVLDYYQSKLAVPYSFTTLYEYLKEYKRFFDWLMDADLTKVPKIADIDLSTLEHLTKKDLEAFVLYLRERPSLNTYSTKEGLSQTTINRTLSALSSLYKYLTEEVENDQGEPYFYRNVMKKVSTKKKKETLASRAENIKQKLFLGDETLAFLDYVDKEYEQKLSNRAKSSFRKNKERDLAIIALLLASGVRLSEAVNLDLKDVNLNMMIIEVIRKGGKRDSVNVAGFAKGYLESYLAVRQRRYKAEKQDLAFFLTEYRGVPNRMDASSIEKMVGKYSEDFKIRVTPHKLRHTLATRLYDATKSQVLVSHQLGHSSTQVTDLYTHIVNDEQKNALDNL</sequence>
<comment type="function">
    <text evidence="1">Site-specific tyrosine recombinase, which acts by catalyzing the cutting and rejoining of the recombining DNA molecules. Essential to convert dimers of the bacterial chromosome into monomers to permit their segregation at cell division.</text>
</comment>
<comment type="activity regulation">
    <text evidence="1">FtsK is required for recombination.</text>
</comment>
<comment type="subcellular location">
    <subcellularLocation>
        <location evidence="1">Cytoplasm</location>
    </subcellularLocation>
</comment>
<comment type="similarity">
    <text evidence="1">Belongs to the 'phage' integrase family. XerS subfamily.</text>
</comment>
<comment type="sequence caution" evidence="4">
    <conflict type="erroneous initiation">
        <sequence resource="EMBL-CDS" id="ABF34092"/>
    </conflict>
</comment>
<dbReference type="EMBL" id="CP000260">
    <property type="protein sequence ID" value="ABF34092.1"/>
    <property type="status" value="ALT_INIT"/>
    <property type="molecule type" value="Genomic_DNA"/>
</dbReference>
<dbReference type="SMR" id="Q1JGQ2"/>
<dbReference type="KEGG" id="sph:MGAS10270_Spy1027"/>
<dbReference type="HOGENOM" id="CLU_027562_9_6_9"/>
<dbReference type="Proteomes" id="UP000002436">
    <property type="component" value="Chromosome"/>
</dbReference>
<dbReference type="GO" id="GO:0005737">
    <property type="term" value="C:cytoplasm"/>
    <property type="evidence" value="ECO:0007669"/>
    <property type="project" value="UniProtKB-SubCell"/>
</dbReference>
<dbReference type="GO" id="GO:0003677">
    <property type="term" value="F:DNA binding"/>
    <property type="evidence" value="ECO:0007669"/>
    <property type="project" value="UniProtKB-KW"/>
</dbReference>
<dbReference type="GO" id="GO:0009037">
    <property type="term" value="F:tyrosine-based site-specific recombinase activity"/>
    <property type="evidence" value="ECO:0007669"/>
    <property type="project" value="UniProtKB-UniRule"/>
</dbReference>
<dbReference type="GO" id="GO:0051301">
    <property type="term" value="P:cell division"/>
    <property type="evidence" value="ECO:0007669"/>
    <property type="project" value="UniProtKB-KW"/>
</dbReference>
<dbReference type="GO" id="GO:0007059">
    <property type="term" value="P:chromosome segregation"/>
    <property type="evidence" value="ECO:0007669"/>
    <property type="project" value="UniProtKB-UniRule"/>
</dbReference>
<dbReference type="GO" id="GO:0006310">
    <property type="term" value="P:DNA recombination"/>
    <property type="evidence" value="ECO:0007669"/>
    <property type="project" value="UniProtKB-UniRule"/>
</dbReference>
<dbReference type="CDD" id="cd00397">
    <property type="entry name" value="DNA_BRE_C"/>
    <property type="match status" value="1"/>
</dbReference>
<dbReference type="Gene3D" id="1.10.150.130">
    <property type="match status" value="1"/>
</dbReference>
<dbReference type="Gene3D" id="1.10.443.10">
    <property type="entry name" value="Intergrase catalytic core"/>
    <property type="match status" value="1"/>
</dbReference>
<dbReference type="HAMAP" id="MF_01816">
    <property type="entry name" value="Recomb_XerS"/>
    <property type="match status" value="1"/>
</dbReference>
<dbReference type="InterPro" id="IPR044068">
    <property type="entry name" value="CB"/>
</dbReference>
<dbReference type="InterPro" id="IPR011010">
    <property type="entry name" value="DNA_brk_join_enz"/>
</dbReference>
<dbReference type="InterPro" id="IPR013762">
    <property type="entry name" value="Integrase-like_cat_sf"/>
</dbReference>
<dbReference type="InterPro" id="IPR002104">
    <property type="entry name" value="Integrase_catalytic"/>
</dbReference>
<dbReference type="InterPro" id="IPR010998">
    <property type="entry name" value="Integrase_recombinase_N"/>
</dbReference>
<dbReference type="InterPro" id="IPR004107">
    <property type="entry name" value="Integrase_SAM-like_N"/>
</dbReference>
<dbReference type="InterPro" id="IPR023670">
    <property type="entry name" value="Recomb_XerS"/>
</dbReference>
<dbReference type="InterPro" id="IPR050090">
    <property type="entry name" value="Tyrosine_recombinase_XerCD"/>
</dbReference>
<dbReference type="NCBIfam" id="NF003462">
    <property type="entry name" value="PRK05084.1"/>
    <property type="match status" value="1"/>
</dbReference>
<dbReference type="PANTHER" id="PTHR30349">
    <property type="entry name" value="PHAGE INTEGRASE-RELATED"/>
    <property type="match status" value="1"/>
</dbReference>
<dbReference type="PANTHER" id="PTHR30349:SF77">
    <property type="entry name" value="TYROSINE RECOMBINASE XERC"/>
    <property type="match status" value="1"/>
</dbReference>
<dbReference type="Pfam" id="PF02899">
    <property type="entry name" value="Phage_int_SAM_1"/>
    <property type="match status" value="1"/>
</dbReference>
<dbReference type="Pfam" id="PF00589">
    <property type="entry name" value="Phage_integrase"/>
    <property type="match status" value="1"/>
</dbReference>
<dbReference type="SUPFAM" id="SSF56349">
    <property type="entry name" value="DNA breaking-rejoining enzymes"/>
    <property type="match status" value="1"/>
</dbReference>
<dbReference type="PROSITE" id="PS51900">
    <property type="entry name" value="CB"/>
    <property type="match status" value="1"/>
</dbReference>
<dbReference type="PROSITE" id="PS51898">
    <property type="entry name" value="TYR_RECOMBINASE"/>
    <property type="match status" value="1"/>
</dbReference>
<name>XERS_STRPD</name>
<reference key="1">
    <citation type="journal article" date="2006" name="Proc. Natl. Acad. Sci. U.S.A.">
        <title>Molecular genetic anatomy of inter- and intraserotype variation in the human bacterial pathogen group A Streptococcus.</title>
        <authorList>
            <person name="Beres S.B."/>
            <person name="Richter E.W."/>
            <person name="Nagiec M.J."/>
            <person name="Sumby P."/>
            <person name="Porcella S.F."/>
            <person name="DeLeo F.R."/>
            <person name="Musser J.M."/>
        </authorList>
    </citation>
    <scope>NUCLEOTIDE SEQUENCE [LARGE SCALE GENOMIC DNA]</scope>
    <source>
        <strain>MGAS10270</strain>
    </source>
</reference>
<evidence type="ECO:0000255" key="1">
    <source>
        <dbReference type="HAMAP-Rule" id="MF_01816"/>
    </source>
</evidence>
<evidence type="ECO:0000255" key="2">
    <source>
        <dbReference type="PROSITE-ProRule" id="PRU01246"/>
    </source>
</evidence>
<evidence type="ECO:0000255" key="3">
    <source>
        <dbReference type="PROSITE-ProRule" id="PRU01248"/>
    </source>
</evidence>
<evidence type="ECO:0000305" key="4"/>
<accession>Q1JGQ2</accession>
<gene>
    <name evidence="1" type="primary">xerS</name>
    <name type="ordered locus">MGAS10270_Spy1027</name>
</gene>
<protein>
    <recommendedName>
        <fullName evidence="1">Tyrosine recombinase XerS</fullName>
    </recommendedName>
</protein>
<keyword id="KW-0131">Cell cycle</keyword>
<keyword id="KW-0132">Cell division</keyword>
<keyword id="KW-0159">Chromosome partition</keyword>
<keyword id="KW-0963">Cytoplasm</keyword>
<keyword id="KW-0229">DNA integration</keyword>
<keyword id="KW-0233">DNA recombination</keyword>
<keyword id="KW-0238">DNA-binding</keyword>
<proteinExistence type="inferred from homology"/>
<feature type="chain" id="PRO_0000372673" description="Tyrosine recombinase XerS">
    <location>
        <begin position="1"/>
        <end position="356"/>
    </location>
</feature>
<feature type="domain" description="Core-binding (CB)" evidence="3">
    <location>
        <begin position="16"/>
        <end position="121"/>
    </location>
</feature>
<feature type="domain" description="Tyr recombinase" evidence="2">
    <location>
        <begin position="169"/>
        <end position="354"/>
    </location>
</feature>
<feature type="active site" evidence="1">
    <location>
        <position position="210"/>
    </location>
</feature>
<feature type="active site" evidence="1">
    <location>
        <position position="234"/>
    </location>
</feature>
<feature type="active site" evidence="1">
    <location>
        <position position="306"/>
    </location>
</feature>
<feature type="active site" evidence="1">
    <location>
        <position position="309"/>
    </location>
</feature>
<feature type="active site" evidence="1">
    <location>
        <position position="332"/>
    </location>
</feature>
<feature type="active site" description="O-(3'-phospho-DNA)-tyrosine intermediate" evidence="1">
    <location>
        <position position="341"/>
    </location>
</feature>
<organism>
    <name type="scientific">Streptococcus pyogenes serotype M2 (strain MGAS10270)</name>
    <dbReference type="NCBI Taxonomy" id="370552"/>
    <lineage>
        <taxon>Bacteria</taxon>
        <taxon>Bacillati</taxon>
        <taxon>Bacillota</taxon>
        <taxon>Bacilli</taxon>
        <taxon>Lactobacillales</taxon>
        <taxon>Streptococcaceae</taxon>
        <taxon>Streptococcus</taxon>
    </lineage>
</organism>